<organism>
    <name type="scientific">Sus scrofa</name>
    <name type="common">Pig</name>
    <dbReference type="NCBI Taxonomy" id="9823"/>
    <lineage>
        <taxon>Eukaryota</taxon>
        <taxon>Metazoa</taxon>
        <taxon>Chordata</taxon>
        <taxon>Craniata</taxon>
        <taxon>Vertebrata</taxon>
        <taxon>Euteleostomi</taxon>
        <taxon>Mammalia</taxon>
        <taxon>Eutheria</taxon>
        <taxon>Laurasiatheria</taxon>
        <taxon>Artiodactyla</taxon>
        <taxon>Suina</taxon>
        <taxon>Suidae</taxon>
        <taxon>Sus</taxon>
    </lineage>
</organism>
<feature type="chain" id="PRO_0000067001" description="NF-kappa-B inhibitor alpha">
    <location>
        <begin position="1"/>
        <end position="314"/>
    </location>
</feature>
<feature type="repeat" description="ANK 1">
    <location>
        <begin position="110"/>
        <end position="139"/>
    </location>
</feature>
<feature type="repeat" description="ANK 2">
    <location>
        <begin position="143"/>
        <end position="172"/>
    </location>
</feature>
<feature type="repeat" description="ANK 3">
    <location>
        <begin position="182"/>
        <end position="211"/>
    </location>
</feature>
<feature type="repeat" description="ANK 4">
    <location>
        <begin position="216"/>
        <end position="245"/>
    </location>
</feature>
<feature type="region of interest" description="Disordered" evidence="4">
    <location>
        <begin position="1"/>
        <end position="41"/>
    </location>
</feature>
<feature type="short sequence motif" description="Destruction motif" evidence="1">
    <location>
        <begin position="30"/>
        <end position="36"/>
    </location>
</feature>
<feature type="short sequence motif" description="Nuclear export signal" evidence="1">
    <location>
        <begin position="45"/>
        <end position="54"/>
    </location>
</feature>
<feature type="short sequence motif" description="Nuclear import signal" evidence="1">
    <location>
        <begin position="110"/>
        <end position="120"/>
    </location>
</feature>
<feature type="compositionally biased region" description="Basic and acidic residues" evidence="4">
    <location>
        <begin position="15"/>
        <end position="41"/>
    </location>
</feature>
<feature type="modified residue" description="Phosphoserine; by IKKA and IKKB" evidence="1">
    <location>
        <position position="32"/>
    </location>
</feature>
<feature type="modified residue" description="Phosphoserine; by IKKA, IKKB, IKKE and TBK1" evidence="1">
    <location>
        <position position="36"/>
    </location>
</feature>
<feature type="modified residue" description="Phosphotyrosine; by Tyr-kinases" evidence="1">
    <location>
        <position position="42"/>
    </location>
</feature>
<feature type="modified residue" description="(3S)-3-hydroxyasparagine; by HIF1AN" evidence="1">
    <location>
        <position position="210"/>
    </location>
</feature>
<feature type="modified residue" description="(3S)-3-hydroxyasparagine; by HIF1AN" evidence="1">
    <location>
        <position position="244"/>
    </location>
</feature>
<feature type="modified residue" description="Phosphoserine; by CK2" evidence="1">
    <location>
        <position position="283"/>
    </location>
</feature>
<feature type="modified residue" description="Phosphoserine; by CK2" evidence="1">
    <location>
        <position position="288"/>
    </location>
</feature>
<feature type="modified residue" description="Phosphothreonine; by CK2" evidence="1">
    <location>
        <position position="291"/>
    </location>
</feature>
<feature type="modified residue" description="Phosphoserine; by CK2" evidence="1">
    <location>
        <position position="293"/>
    </location>
</feature>
<feature type="modified residue" description="Phosphothreonine" evidence="1">
    <location>
        <position position="296"/>
    </location>
</feature>
<feature type="cross-link" description="Glycyl lysine isopeptide (Lys-Gly) (interchain with G-Cter in SUMO); alternate" evidence="2">
    <location>
        <position position="21"/>
    </location>
</feature>
<feature type="cross-link" description="Glycyl lysine isopeptide (Lys-Gly) (interchain with G-Cter in ubiquitin); alternate" evidence="2">
    <location>
        <position position="21"/>
    </location>
</feature>
<feature type="cross-link" description="Glycyl lysine isopeptide (Lys-Gly) (interchain with G-Cter in ubiquitin)" evidence="1 3">
    <location>
        <position position="22"/>
    </location>
</feature>
<reference key="1">
    <citation type="journal article" date="1993" name="EMBO J.">
        <title>Cytokine-inducible expression in endothelial cells of an IkappaB alpha-like gene is regulated by NF-kappaB.</title>
        <authorList>
            <person name="De Martin R."/>
            <person name="Vanhove B."/>
            <person name="Cheng Q."/>
            <person name="Hofer E."/>
            <person name="Csizmadia V."/>
            <person name="Winkler H."/>
            <person name="Bach F.H."/>
        </authorList>
    </citation>
    <scope>NUCLEOTIDE SEQUENCE [GENOMIC DNA]</scope>
    <source>
        <tissue>Aorta</tissue>
    </source>
</reference>
<reference key="2">
    <citation type="journal article" date="1995" name="Gene">
        <title>Intron-exon structure of the porcine IkappaB alpha-encoding gene.</title>
        <authorList>
            <person name="De Martin R."/>
            <person name="Holzmueller H."/>
            <person name="Hofer E."/>
            <person name="Bach F.H."/>
        </authorList>
    </citation>
    <scope>NUCLEOTIDE SEQUENCE [GENOMIC DNA]</scope>
</reference>
<reference key="3">
    <citation type="journal article" date="2011" name="J. Virol.">
        <title>Species-specific variation in RELA underlies differences in NF-kappaB activity: a potential role in African swine fever pathogenesis.</title>
        <authorList>
            <person name="Palgrave C.J."/>
            <person name="Gilmour L."/>
            <person name="Lowden C.S."/>
            <person name="Lillico S.G."/>
            <person name="Mellencamp M.A."/>
            <person name="Whitelaw C.B."/>
        </authorList>
    </citation>
    <scope>NUCLEOTIDE SEQUENCE [MRNA] OF 22-314</scope>
    <source>
        <tissue>Blood</tissue>
    </source>
</reference>
<proteinExistence type="evidence at protein level"/>
<gene>
    <name type="primary">NFKBIA</name>
    <name type="synonym">IKBA</name>
</gene>
<dbReference type="EMBL" id="Z21968">
    <property type="protein sequence ID" value="CAA79979.1"/>
    <property type="molecule type" value="Genomic_DNA"/>
</dbReference>
<dbReference type="EMBL" id="Z35483">
    <property type="protein sequence ID" value="CAA84619.1"/>
    <property type="molecule type" value="Genomic_DNA"/>
</dbReference>
<dbReference type="EMBL" id="FN421467">
    <property type="protein sequence ID" value="CAZ65750.1"/>
    <property type="molecule type" value="mRNA"/>
</dbReference>
<dbReference type="PIR" id="S35314">
    <property type="entry name" value="S35314"/>
</dbReference>
<dbReference type="RefSeq" id="NP_001005150.1">
    <property type="nucleotide sequence ID" value="NM_001005150.1"/>
</dbReference>
<dbReference type="SMR" id="Q08353"/>
<dbReference type="FunCoup" id="Q08353">
    <property type="interactions" value="418"/>
</dbReference>
<dbReference type="IntAct" id="Q08353">
    <property type="interactions" value="1"/>
</dbReference>
<dbReference type="STRING" id="9823.ENSSSCP00000002133"/>
<dbReference type="PaxDb" id="9823-ENSSSCP00000002133"/>
<dbReference type="Ensembl" id="ENSSSCT00000002184.6">
    <property type="protein sequence ID" value="ENSSSCP00000002133.2"/>
    <property type="gene ID" value="ENSSSCG00000001952.6"/>
</dbReference>
<dbReference type="Ensembl" id="ENSSSCT00015039015.1">
    <property type="protein sequence ID" value="ENSSSCP00015015516.1"/>
    <property type="gene ID" value="ENSSSCG00015029389.1"/>
</dbReference>
<dbReference type="Ensembl" id="ENSSSCT00025092560.1">
    <property type="protein sequence ID" value="ENSSSCP00025040620.1"/>
    <property type="gene ID" value="ENSSSCG00025067390.1"/>
</dbReference>
<dbReference type="Ensembl" id="ENSSSCT00030082138.1">
    <property type="protein sequence ID" value="ENSSSCP00030037706.1"/>
    <property type="gene ID" value="ENSSSCG00030058851.1"/>
</dbReference>
<dbReference type="Ensembl" id="ENSSSCT00035099812.1">
    <property type="protein sequence ID" value="ENSSSCP00035042295.1"/>
    <property type="gene ID" value="ENSSSCG00035073638.1"/>
</dbReference>
<dbReference type="Ensembl" id="ENSSSCT00040055590.1">
    <property type="protein sequence ID" value="ENSSSCP00040023108.1"/>
    <property type="gene ID" value="ENSSSCG00040041514.1"/>
</dbReference>
<dbReference type="Ensembl" id="ENSSSCT00045017158.1">
    <property type="protein sequence ID" value="ENSSSCP00045011831.1"/>
    <property type="gene ID" value="ENSSSCG00045010107.1"/>
</dbReference>
<dbReference type="Ensembl" id="ENSSSCT00050008579.1">
    <property type="protein sequence ID" value="ENSSSCP00050003687.1"/>
    <property type="gene ID" value="ENSSSCG00050006268.1"/>
</dbReference>
<dbReference type="Ensembl" id="ENSSSCT00055058871.1">
    <property type="protein sequence ID" value="ENSSSCP00055047145.1"/>
    <property type="gene ID" value="ENSSSCG00055029632.1"/>
</dbReference>
<dbReference type="Ensembl" id="ENSSSCT00060088999.1">
    <property type="protein sequence ID" value="ENSSSCP00060038508.1"/>
    <property type="gene ID" value="ENSSSCG00060065186.1"/>
</dbReference>
<dbReference type="Ensembl" id="ENSSSCT00065081421.1">
    <property type="protein sequence ID" value="ENSSSCP00065035456.1"/>
    <property type="gene ID" value="ENSSSCG00065059454.1"/>
</dbReference>
<dbReference type="Ensembl" id="ENSSSCT00070014299.1">
    <property type="protein sequence ID" value="ENSSSCP00070011804.1"/>
    <property type="gene ID" value="ENSSSCG00070007418.1"/>
</dbReference>
<dbReference type="Ensembl" id="ENSSSCT00070014305.1">
    <property type="protein sequence ID" value="ENSSSCP00070011807.1"/>
    <property type="gene ID" value="ENSSSCG00070007418.1"/>
</dbReference>
<dbReference type="Ensembl" id="ENSSSCT00085004117">
    <property type="protein sequence ID" value="ENSSSCP00085003053"/>
    <property type="gene ID" value="ENSSSCG00085002366"/>
</dbReference>
<dbReference type="Ensembl" id="ENSSSCT00090037517">
    <property type="protein sequence ID" value="ENSSSCP00090023351"/>
    <property type="gene ID" value="ENSSSCG00090021169"/>
</dbReference>
<dbReference type="Ensembl" id="ENSSSCT00105001326">
    <property type="protein sequence ID" value="ENSSSCP00105000876"/>
    <property type="gene ID" value="ENSSSCG00105000739"/>
</dbReference>
<dbReference type="Ensembl" id="ENSSSCT00110033668">
    <property type="protein sequence ID" value="ENSSSCP00110022793"/>
    <property type="gene ID" value="ENSSSCG00110017662"/>
</dbReference>
<dbReference type="Ensembl" id="ENSSSCT00115005481">
    <property type="protein sequence ID" value="ENSSSCP00115005090"/>
    <property type="gene ID" value="ENSSSCG00115003265"/>
</dbReference>
<dbReference type="Ensembl" id="ENSSSCT00130054655">
    <property type="protein sequence ID" value="ENSSSCP00130039164"/>
    <property type="gene ID" value="ENSSSCG00130027945"/>
</dbReference>
<dbReference type="GeneID" id="406188"/>
<dbReference type="KEGG" id="ssc:406188"/>
<dbReference type="CTD" id="4792"/>
<dbReference type="VGNC" id="VGNC:90721">
    <property type="gene designation" value="NFKBIA"/>
</dbReference>
<dbReference type="eggNOG" id="KOG0504">
    <property type="taxonomic scope" value="Eukaryota"/>
</dbReference>
<dbReference type="GeneTree" id="ENSGT00940000162733"/>
<dbReference type="InParanoid" id="Q08353"/>
<dbReference type="OMA" id="EIRIQPQ"/>
<dbReference type="OrthoDB" id="20727at2759"/>
<dbReference type="TreeFam" id="TF320166"/>
<dbReference type="Reactome" id="R-SSC-1169091">
    <property type="pathway name" value="Activation of NF-kappaB in B cells"/>
</dbReference>
<dbReference type="Reactome" id="R-SSC-1810476">
    <property type="pathway name" value="RIP-mediated NFkB activation via ZBP1"/>
</dbReference>
<dbReference type="Reactome" id="R-SSC-202424">
    <property type="pathway name" value="Downstream TCR signaling"/>
</dbReference>
<dbReference type="Reactome" id="R-SSC-209560">
    <property type="pathway name" value="NF-kB is activated and signals survival"/>
</dbReference>
<dbReference type="Reactome" id="R-SSC-2871837">
    <property type="pathway name" value="FCERI mediated NF-kB activation"/>
</dbReference>
<dbReference type="Reactome" id="R-SSC-445989">
    <property type="pathway name" value="TAK1-dependent IKK and NF-kappa-B activation"/>
</dbReference>
<dbReference type="Reactome" id="R-SSC-4755510">
    <property type="pathway name" value="SUMOylation of immune response proteins"/>
</dbReference>
<dbReference type="Reactome" id="R-SSC-5607764">
    <property type="pathway name" value="CLEC7A (Dectin-1) signaling"/>
</dbReference>
<dbReference type="Reactome" id="R-SSC-5689880">
    <property type="pathway name" value="Ub-specific processing proteases"/>
</dbReference>
<dbReference type="Reactome" id="R-SSC-9020702">
    <property type="pathway name" value="Interleukin-1 signaling"/>
</dbReference>
<dbReference type="Reactome" id="R-SSC-933542">
    <property type="pathway name" value="TRAF6 mediated NF-kB activation"/>
</dbReference>
<dbReference type="Reactome" id="R-SSC-9860927">
    <property type="pathway name" value="Turbulent (oscillatory, disturbed) flow shear stress activates signaling by PIEZO1 and integrins in endothelial cells"/>
</dbReference>
<dbReference type="Proteomes" id="UP000008227">
    <property type="component" value="Chromosome 7"/>
</dbReference>
<dbReference type="Proteomes" id="UP000314985">
    <property type="component" value="Chromosome 7"/>
</dbReference>
<dbReference type="Proteomes" id="UP000694570">
    <property type="component" value="Unplaced"/>
</dbReference>
<dbReference type="Proteomes" id="UP000694571">
    <property type="component" value="Unplaced"/>
</dbReference>
<dbReference type="Proteomes" id="UP000694720">
    <property type="component" value="Unplaced"/>
</dbReference>
<dbReference type="Proteomes" id="UP000694722">
    <property type="component" value="Unplaced"/>
</dbReference>
<dbReference type="Proteomes" id="UP000694723">
    <property type="component" value="Unplaced"/>
</dbReference>
<dbReference type="Proteomes" id="UP000694724">
    <property type="component" value="Unplaced"/>
</dbReference>
<dbReference type="Proteomes" id="UP000694725">
    <property type="component" value="Unplaced"/>
</dbReference>
<dbReference type="Proteomes" id="UP000694726">
    <property type="component" value="Unplaced"/>
</dbReference>
<dbReference type="Proteomes" id="UP000694727">
    <property type="component" value="Unplaced"/>
</dbReference>
<dbReference type="Proteomes" id="UP000694728">
    <property type="component" value="Unplaced"/>
</dbReference>
<dbReference type="Bgee" id="ENSSSCG00000001952">
    <property type="expression patterns" value="Expressed in endocardial endothelium and 45 other cell types or tissues"/>
</dbReference>
<dbReference type="GO" id="GO:0005737">
    <property type="term" value="C:cytoplasm"/>
    <property type="evidence" value="ECO:0000250"/>
    <property type="project" value="AgBase"/>
</dbReference>
<dbReference type="GO" id="GO:0005829">
    <property type="term" value="C:cytosol"/>
    <property type="evidence" value="ECO:0000318"/>
    <property type="project" value="GO_Central"/>
</dbReference>
<dbReference type="GO" id="GO:0033256">
    <property type="term" value="C:I-kappaB/NF-kappaB complex"/>
    <property type="evidence" value="ECO:0007669"/>
    <property type="project" value="Ensembl"/>
</dbReference>
<dbReference type="GO" id="GO:0005634">
    <property type="term" value="C:nucleus"/>
    <property type="evidence" value="ECO:0000250"/>
    <property type="project" value="AgBase"/>
</dbReference>
<dbReference type="GO" id="GO:0005886">
    <property type="term" value="C:plasma membrane"/>
    <property type="evidence" value="ECO:0007669"/>
    <property type="project" value="Ensembl"/>
</dbReference>
<dbReference type="GO" id="GO:0042802">
    <property type="term" value="F:identical protein binding"/>
    <property type="evidence" value="ECO:0007669"/>
    <property type="project" value="Ensembl"/>
</dbReference>
<dbReference type="GO" id="GO:0051059">
    <property type="term" value="F:NF-kappaB binding"/>
    <property type="evidence" value="ECO:0000250"/>
    <property type="project" value="UniProtKB"/>
</dbReference>
<dbReference type="GO" id="GO:0008139">
    <property type="term" value="F:nuclear localization sequence binding"/>
    <property type="evidence" value="ECO:0000250"/>
    <property type="project" value="AgBase"/>
</dbReference>
<dbReference type="GO" id="GO:0140311">
    <property type="term" value="F:protein sequestering activity"/>
    <property type="evidence" value="ECO:0000250"/>
    <property type="project" value="UniProtKB"/>
</dbReference>
<dbReference type="GO" id="GO:0140416">
    <property type="term" value="F:transcription regulator inhibitor activity"/>
    <property type="evidence" value="ECO:0007669"/>
    <property type="project" value="Ensembl"/>
</dbReference>
<dbReference type="GO" id="GO:0031625">
    <property type="term" value="F:ubiquitin protein ligase binding"/>
    <property type="evidence" value="ECO:0000250"/>
    <property type="project" value="AgBase"/>
</dbReference>
<dbReference type="GO" id="GO:0050853">
    <property type="term" value="P:B cell receptor signaling pathway"/>
    <property type="evidence" value="ECO:0007669"/>
    <property type="project" value="Ensembl"/>
</dbReference>
<dbReference type="GO" id="GO:0007249">
    <property type="term" value="P:canonical NF-kappaB signal transduction"/>
    <property type="evidence" value="ECO:0007669"/>
    <property type="project" value="Ensembl"/>
</dbReference>
<dbReference type="GO" id="GO:0070498">
    <property type="term" value="P:interleukin-1-mediated signaling pathway"/>
    <property type="evidence" value="ECO:0007669"/>
    <property type="project" value="Ensembl"/>
</dbReference>
<dbReference type="GO" id="GO:0031663">
    <property type="term" value="P:lipopolysaccharide-mediated signaling pathway"/>
    <property type="evidence" value="ECO:0000250"/>
    <property type="project" value="AgBase"/>
</dbReference>
<dbReference type="GO" id="GO:0043124">
    <property type="term" value="P:negative regulation of canonical NF-kappaB signal transduction"/>
    <property type="evidence" value="ECO:0000318"/>
    <property type="project" value="GO_Central"/>
</dbReference>
<dbReference type="GO" id="GO:0032375">
    <property type="term" value="P:negative regulation of cholesterol transport"/>
    <property type="evidence" value="ECO:0007669"/>
    <property type="project" value="Ensembl"/>
</dbReference>
<dbReference type="GO" id="GO:1900016">
    <property type="term" value="P:negative regulation of cytokine production involved in inflammatory response"/>
    <property type="evidence" value="ECO:0007669"/>
    <property type="project" value="Ensembl"/>
</dbReference>
<dbReference type="GO" id="GO:0010888">
    <property type="term" value="P:negative regulation of lipid storage"/>
    <property type="evidence" value="ECO:0007669"/>
    <property type="project" value="Ensembl"/>
</dbReference>
<dbReference type="GO" id="GO:0010745">
    <property type="term" value="P:negative regulation of macrophage derived foam cell differentiation"/>
    <property type="evidence" value="ECO:0007669"/>
    <property type="project" value="Ensembl"/>
</dbReference>
<dbReference type="GO" id="GO:0045638">
    <property type="term" value="P:negative regulation of myeloid cell differentiation"/>
    <property type="evidence" value="ECO:0000250"/>
    <property type="project" value="AgBase"/>
</dbReference>
<dbReference type="GO" id="GO:0045746">
    <property type="term" value="P:negative regulation of Notch signaling pathway"/>
    <property type="evidence" value="ECO:0000250"/>
    <property type="project" value="AgBase"/>
</dbReference>
<dbReference type="GO" id="GO:0042308">
    <property type="term" value="P:negative regulation of protein import into nucleus"/>
    <property type="evidence" value="ECO:0007669"/>
    <property type="project" value="Ensembl"/>
</dbReference>
<dbReference type="GO" id="GO:0000122">
    <property type="term" value="P:negative regulation of transcription by RNA polymerase II"/>
    <property type="evidence" value="ECO:0007669"/>
    <property type="project" value="Ensembl"/>
</dbReference>
<dbReference type="GO" id="GO:0038061">
    <property type="term" value="P:non-canonical NF-kappaB signal transduction"/>
    <property type="evidence" value="ECO:0007669"/>
    <property type="project" value="Ensembl"/>
</dbReference>
<dbReference type="GO" id="GO:0007219">
    <property type="term" value="P:Notch signaling pathway"/>
    <property type="evidence" value="ECO:0007669"/>
    <property type="project" value="Ensembl"/>
</dbReference>
<dbReference type="GO" id="GO:0070427">
    <property type="term" value="P:nucleotide-binding oligomerization domain containing 1 signaling pathway"/>
    <property type="evidence" value="ECO:0007669"/>
    <property type="project" value="Ensembl"/>
</dbReference>
<dbReference type="GO" id="GO:0070431">
    <property type="term" value="P:nucleotide-binding oligomerization domain containing 2 signaling pathway"/>
    <property type="evidence" value="ECO:0007669"/>
    <property type="project" value="Ensembl"/>
</dbReference>
<dbReference type="GO" id="GO:0050729">
    <property type="term" value="P:positive regulation of inflammatory response"/>
    <property type="evidence" value="ECO:0007669"/>
    <property type="project" value="Ensembl"/>
</dbReference>
<dbReference type="GO" id="GO:0060261">
    <property type="term" value="P:positive regulation of transcription initiation by RNA polymerase II"/>
    <property type="evidence" value="ECO:0007669"/>
    <property type="project" value="Ensembl"/>
</dbReference>
<dbReference type="GO" id="GO:0006606">
    <property type="term" value="P:protein import into nucleus"/>
    <property type="evidence" value="ECO:0007669"/>
    <property type="project" value="Ensembl"/>
</dbReference>
<dbReference type="GO" id="GO:0042127">
    <property type="term" value="P:regulation of cell population proliferation"/>
    <property type="evidence" value="ECO:0000250"/>
    <property type="project" value="AgBase"/>
</dbReference>
<dbReference type="GO" id="GO:0043330">
    <property type="term" value="P:response to exogenous dsRNA"/>
    <property type="evidence" value="ECO:0000250"/>
    <property type="project" value="AgBase"/>
</dbReference>
<dbReference type="GO" id="GO:0032496">
    <property type="term" value="P:response to lipopolysaccharide"/>
    <property type="evidence" value="ECO:0000250"/>
    <property type="project" value="AgBase"/>
</dbReference>
<dbReference type="GO" id="GO:0032495">
    <property type="term" value="P:response to muramyl dipeptide"/>
    <property type="evidence" value="ECO:0007669"/>
    <property type="project" value="Ensembl"/>
</dbReference>
<dbReference type="GO" id="GO:0035994">
    <property type="term" value="P:response to muscle stretch"/>
    <property type="evidence" value="ECO:0007669"/>
    <property type="project" value="Ensembl"/>
</dbReference>
<dbReference type="GO" id="GO:0023019">
    <property type="term" value="P:signal transduction involved in regulation of gene expression"/>
    <property type="evidence" value="ECO:0007669"/>
    <property type="project" value="Ensembl"/>
</dbReference>
<dbReference type="GO" id="GO:0034142">
    <property type="term" value="P:toll-like receptor 4 signaling pathway"/>
    <property type="evidence" value="ECO:0007669"/>
    <property type="project" value="Ensembl"/>
</dbReference>
<dbReference type="GO" id="GO:0033209">
    <property type="term" value="P:tumor necrosis factor-mediated signaling pathway"/>
    <property type="evidence" value="ECO:0007669"/>
    <property type="project" value="Ensembl"/>
</dbReference>
<dbReference type="FunFam" id="1.25.40.20:FF:000124">
    <property type="entry name" value="NF-kappa-B inhibitor alpha isoform X2"/>
    <property type="match status" value="1"/>
</dbReference>
<dbReference type="Gene3D" id="1.25.40.20">
    <property type="entry name" value="Ankyrin repeat-containing domain"/>
    <property type="match status" value="1"/>
</dbReference>
<dbReference type="InterPro" id="IPR002110">
    <property type="entry name" value="Ankyrin_rpt"/>
</dbReference>
<dbReference type="InterPro" id="IPR036770">
    <property type="entry name" value="Ankyrin_rpt-contain_sf"/>
</dbReference>
<dbReference type="InterPro" id="IPR051070">
    <property type="entry name" value="NF-kappa-B_inhibitor"/>
</dbReference>
<dbReference type="PANTHER" id="PTHR46680">
    <property type="entry name" value="NF-KAPPA-B INHIBITOR ALPHA"/>
    <property type="match status" value="1"/>
</dbReference>
<dbReference type="PANTHER" id="PTHR46680:SF1">
    <property type="entry name" value="NF-KAPPA-B INHIBITOR ALPHA"/>
    <property type="match status" value="1"/>
</dbReference>
<dbReference type="Pfam" id="PF12796">
    <property type="entry name" value="Ank_2"/>
    <property type="match status" value="2"/>
</dbReference>
<dbReference type="PRINTS" id="PR01415">
    <property type="entry name" value="ANKYRIN"/>
</dbReference>
<dbReference type="SMART" id="SM00248">
    <property type="entry name" value="ANK"/>
    <property type="match status" value="5"/>
</dbReference>
<dbReference type="SUPFAM" id="SSF48403">
    <property type="entry name" value="Ankyrin repeat"/>
    <property type="match status" value="1"/>
</dbReference>
<dbReference type="PROSITE" id="PS50297">
    <property type="entry name" value="ANK_REP_REGION"/>
    <property type="match status" value="1"/>
</dbReference>
<dbReference type="PROSITE" id="PS50088">
    <property type="entry name" value="ANK_REPEAT"/>
    <property type="match status" value="3"/>
</dbReference>
<sequence>MFQPAEPGQEWAMEGPRDALKKERLLDDRHDSGLDSMKDEEYEQMVKELREIRLEPQEAPRGAEPWKQQLTEDGDSFLHLAIIHEEKALTMEVVRQVKGDLAFLNFQNNLQQTPLHLAVITNQPEIAEALLEAGCDPELRDFRGNTPLHLACEQGCLASVGVLTQPRGTQHLHSILQATNYNGHTCLHLASIHGYLGIVELLVSLGADVNAQEPCNGRTALHLAVDLQNPDLVSLLLKCGADVNRVTYQGYSPYQLTWGRPSTRIQQQLGQLTLENLQMLPESEDEESYDTESEFTEDELPYDDCVLGGQRLTL</sequence>
<keyword id="KW-0040">ANK repeat</keyword>
<keyword id="KW-0963">Cytoplasm</keyword>
<keyword id="KW-0379">Hydroxylation</keyword>
<keyword id="KW-1017">Isopeptide bond</keyword>
<keyword id="KW-0539">Nucleus</keyword>
<keyword id="KW-0597">Phosphoprotein</keyword>
<keyword id="KW-1185">Reference proteome</keyword>
<keyword id="KW-0677">Repeat</keyword>
<keyword id="KW-0832">Ubl conjugation</keyword>
<comment type="function">
    <text evidence="1">Inhibits the activity of dimeric NF-kappa-B/REL complexes by trapping REL (RELA/p65 and NFKB1/p50) dimers in the cytoplasm by masking their nuclear localization signals. On cellular stimulation by immune and pro-inflammatory responses, becomes phosphorylated promoting ubiquitination and degradation, enabling the dimeric RELA to translocate to the nucleus and activate transcription.</text>
</comment>
<comment type="subunit">
    <text evidence="1">Interacts with RELA; the interaction requires the nuclear import signal. Part of a 70-90 kDa complex at least consisting of CHUK, IKBKB, NFKBIA, RELA, ELP1 and MAP3K14. Interacts with NKIRAS1 and NKIRAS2. Interacts with RWDD3; the interaction enhances sumoylation. Interacts with PRMT2. Interacts with PRKACA in platelets; this interaction is disrupted by thrombin and collagen. Interacts with MEFV. Interacts with DDRGK1; positively regulates NFKBIA phosphorylation and degradation. Interacts with HNRNPA2B1; the interaction may be mediated by the RRM2 domain of HNRNPA2B1, and HNRNPA2B1 may interact simultaneously with FAM76B and either NFKBIA or NFKBIE to form a complex.</text>
</comment>
<comment type="interaction">
    <interactant intactId="EBI-12558699">
        <id>Q08353</id>
    </interactant>
    <interactant intactId="EBI-12558622">
        <id>PRO_0000038062</id>
        <dbReference type="UniProtKB" id="P21530"/>
    </interactant>
    <organismsDiffer>true</organismsDiffer>
    <experiments>4</experiments>
</comment>
<comment type="subcellular location">
    <subcellularLocation>
        <location evidence="1">Cytoplasm</location>
    </subcellularLocation>
    <subcellularLocation>
        <location evidence="1">Nucleus</location>
    </subcellularLocation>
    <text evidence="1">Shuttles between the nucleus and the cytoplasm by a nuclear localization signal (NLS) and a CRM1-dependent nuclear export.</text>
</comment>
<comment type="PTM">
    <text evidence="1">Phosphorylated at Ser-32 and Ser-36 by IKKA/CHUK and IKKB/IKBKB; disables inhibition of NF-kappa-B DNA-binding activity. Phosphorylation at positions 32 and 36 is prerequisite to recognition by the SCF(FBXW11) and SCF(BTRC) complexes, leading to polyubiquitination and subsequent degradation.</text>
</comment>
<comment type="PTM">
    <text evidence="1">Polyubiquitinated at Lys-21 and/or Lys-22 following phosphorylation at Ser-32 and Ser-36. Monoubiquitinated at Lys-21 and/or Lys-22 by UBE2D3. Ubiquitin chain elongation is then performed by CDC34 in cooperation with the SCF(FBXW11) E3 ligase complex, building ubiquitin chains from the UBE2D3-primed NFKBIA-linked ubiquitin. The resulting polyubiquitination leads to protein degradation. Also ubiquitinated by the SCF(BTRC) complex following stimulus-dependent phosphorylation at Ser-32 and Ser-36. Deubiquitinated by USP38, leading to NF-kappa-B inhibition (By similarity).</text>
</comment>
<comment type="PTM">
    <text evidence="1">Sumoylated; sumoylation requires the presence of the nuclear import signal. Sumoylation blocks ubiquitination and proteasome-mediated degradation of the protein thereby increasing the protein stability.</text>
</comment>
<comment type="PTM">
    <text evidence="1">Hydroxylated by HIF1AN.</text>
</comment>
<comment type="similarity">
    <text evidence="5">Belongs to the NF-kappa-B inhibitor family.</text>
</comment>
<protein>
    <recommendedName>
        <fullName>NF-kappa-B inhibitor alpha</fullName>
    </recommendedName>
    <alternativeName>
        <fullName>ECI-6</fullName>
    </alternativeName>
    <alternativeName>
        <fullName>I-kappa-B-alpha</fullName>
        <shortName>IkB-alpha</shortName>
        <shortName>IkappaBalpha</shortName>
    </alternativeName>
</protein>
<name>IKBA_PIG</name>
<evidence type="ECO:0000250" key="1">
    <source>
        <dbReference type="UniProtKB" id="P25963"/>
    </source>
</evidence>
<evidence type="ECO:0000250" key="2">
    <source>
        <dbReference type="UniProtKB" id="Q9Z1E3"/>
    </source>
</evidence>
<evidence type="ECO:0000255" key="3"/>
<evidence type="ECO:0000256" key="4">
    <source>
        <dbReference type="SAM" id="MobiDB-lite"/>
    </source>
</evidence>
<evidence type="ECO:0000305" key="5"/>
<accession>Q08353</accession>
<accession>F2Q9A9</accession>